<evidence type="ECO:0000255" key="1">
    <source>
        <dbReference type="HAMAP-Rule" id="MF_00336"/>
    </source>
</evidence>
<gene>
    <name evidence="1" type="primary">bioD</name>
    <name type="ordered locus">Adeh_0070</name>
</gene>
<keyword id="KW-0067">ATP-binding</keyword>
<keyword id="KW-0093">Biotin biosynthesis</keyword>
<keyword id="KW-0963">Cytoplasm</keyword>
<keyword id="KW-0436">Ligase</keyword>
<keyword id="KW-0460">Magnesium</keyword>
<keyword id="KW-0479">Metal-binding</keyword>
<keyword id="KW-0547">Nucleotide-binding</keyword>
<keyword id="KW-1185">Reference proteome</keyword>
<dbReference type="EC" id="6.3.3.3" evidence="1"/>
<dbReference type="EMBL" id="CP000251">
    <property type="protein sequence ID" value="ABC79848.1"/>
    <property type="molecule type" value="Genomic_DNA"/>
</dbReference>
<dbReference type="RefSeq" id="WP_011419131.1">
    <property type="nucleotide sequence ID" value="NC_007760.1"/>
</dbReference>
<dbReference type="SMR" id="Q2IM14"/>
<dbReference type="STRING" id="290397.Adeh_0070"/>
<dbReference type="KEGG" id="ade:Adeh_0070"/>
<dbReference type="eggNOG" id="COG0132">
    <property type="taxonomic scope" value="Bacteria"/>
</dbReference>
<dbReference type="HOGENOM" id="CLU_072551_3_1_7"/>
<dbReference type="OrthoDB" id="9802097at2"/>
<dbReference type="UniPathway" id="UPA00078">
    <property type="reaction ID" value="UER00161"/>
</dbReference>
<dbReference type="Proteomes" id="UP000001935">
    <property type="component" value="Chromosome"/>
</dbReference>
<dbReference type="GO" id="GO:0005829">
    <property type="term" value="C:cytosol"/>
    <property type="evidence" value="ECO:0007669"/>
    <property type="project" value="TreeGrafter"/>
</dbReference>
<dbReference type="GO" id="GO:0005524">
    <property type="term" value="F:ATP binding"/>
    <property type="evidence" value="ECO:0007669"/>
    <property type="project" value="UniProtKB-UniRule"/>
</dbReference>
<dbReference type="GO" id="GO:0004141">
    <property type="term" value="F:dethiobiotin synthase activity"/>
    <property type="evidence" value="ECO:0007669"/>
    <property type="project" value="UniProtKB-UniRule"/>
</dbReference>
<dbReference type="GO" id="GO:0000287">
    <property type="term" value="F:magnesium ion binding"/>
    <property type="evidence" value="ECO:0007669"/>
    <property type="project" value="UniProtKB-UniRule"/>
</dbReference>
<dbReference type="GO" id="GO:0009102">
    <property type="term" value="P:biotin biosynthetic process"/>
    <property type="evidence" value="ECO:0007669"/>
    <property type="project" value="UniProtKB-UniRule"/>
</dbReference>
<dbReference type="CDD" id="cd03109">
    <property type="entry name" value="DTBS"/>
    <property type="match status" value="1"/>
</dbReference>
<dbReference type="Gene3D" id="3.40.50.300">
    <property type="entry name" value="P-loop containing nucleotide triphosphate hydrolases"/>
    <property type="match status" value="1"/>
</dbReference>
<dbReference type="HAMAP" id="MF_00336">
    <property type="entry name" value="BioD"/>
    <property type="match status" value="1"/>
</dbReference>
<dbReference type="InterPro" id="IPR004472">
    <property type="entry name" value="DTB_synth_BioD"/>
</dbReference>
<dbReference type="InterPro" id="IPR027417">
    <property type="entry name" value="P-loop_NTPase"/>
</dbReference>
<dbReference type="NCBIfam" id="TIGR00347">
    <property type="entry name" value="bioD"/>
    <property type="match status" value="1"/>
</dbReference>
<dbReference type="PANTHER" id="PTHR43210">
    <property type="entry name" value="DETHIOBIOTIN SYNTHETASE"/>
    <property type="match status" value="1"/>
</dbReference>
<dbReference type="PANTHER" id="PTHR43210:SF5">
    <property type="entry name" value="DETHIOBIOTIN SYNTHETASE"/>
    <property type="match status" value="1"/>
</dbReference>
<dbReference type="Pfam" id="PF13500">
    <property type="entry name" value="AAA_26"/>
    <property type="match status" value="1"/>
</dbReference>
<dbReference type="PIRSF" id="PIRSF006755">
    <property type="entry name" value="DTB_synth"/>
    <property type="match status" value="1"/>
</dbReference>
<dbReference type="SUPFAM" id="SSF52540">
    <property type="entry name" value="P-loop containing nucleoside triphosphate hydrolases"/>
    <property type="match status" value="1"/>
</dbReference>
<comment type="function">
    <text evidence="1">Catalyzes a mechanistically unusual reaction, the ATP-dependent insertion of CO2 between the N7 and N8 nitrogen atoms of 7,8-diaminopelargonic acid (DAPA, also called 7,8-diammoniononanoate) to form a ureido ring.</text>
</comment>
<comment type="catalytic activity">
    <reaction evidence="1">
        <text>(7R,8S)-7,8-diammoniononanoate + CO2 + ATP = (4R,5S)-dethiobiotin + ADP + phosphate + 3 H(+)</text>
        <dbReference type="Rhea" id="RHEA:15805"/>
        <dbReference type="ChEBI" id="CHEBI:15378"/>
        <dbReference type="ChEBI" id="CHEBI:16526"/>
        <dbReference type="ChEBI" id="CHEBI:30616"/>
        <dbReference type="ChEBI" id="CHEBI:43474"/>
        <dbReference type="ChEBI" id="CHEBI:149469"/>
        <dbReference type="ChEBI" id="CHEBI:149473"/>
        <dbReference type="ChEBI" id="CHEBI:456216"/>
        <dbReference type="EC" id="6.3.3.3"/>
    </reaction>
</comment>
<comment type="cofactor">
    <cofactor evidence="1">
        <name>Mg(2+)</name>
        <dbReference type="ChEBI" id="CHEBI:18420"/>
    </cofactor>
</comment>
<comment type="pathway">
    <text evidence="1">Cofactor biosynthesis; biotin biosynthesis; biotin from 7,8-diaminononanoate: step 1/2.</text>
</comment>
<comment type="subunit">
    <text evidence="1">Homodimer.</text>
</comment>
<comment type="subcellular location">
    <subcellularLocation>
        <location evidence="1">Cytoplasm</location>
    </subcellularLocation>
</comment>
<comment type="similarity">
    <text evidence="1">Belongs to the dethiobiotin synthetase family.</text>
</comment>
<feature type="chain" id="PRO_0000302473" description="ATP-dependent dethiobiotin synthetase BioD">
    <location>
        <begin position="1"/>
        <end position="223"/>
    </location>
</feature>
<feature type="active site" evidence="1">
    <location>
        <position position="37"/>
    </location>
</feature>
<feature type="binding site" evidence="1">
    <location>
        <position position="16"/>
    </location>
    <ligand>
        <name>Mg(2+)</name>
        <dbReference type="ChEBI" id="CHEBI:18420"/>
    </ligand>
</feature>
<feature type="binding site" evidence="1">
    <location>
        <position position="41"/>
    </location>
    <ligand>
        <name>substrate</name>
    </ligand>
</feature>
<feature type="binding site" evidence="1">
    <location>
        <position position="50"/>
    </location>
    <ligand>
        <name>ATP</name>
        <dbReference type="ChEBI" id="CHEBI:30616"/>
    </ligand>
</feature>
<feature type="binding site" evidence="1">
    <location>
        <position position="50"/>
    </location>
    <ligand>
        <name>Mg(2+)</name>
        <dbReference type="ChEBI" id="CHEBI:18420"/>
    </ligand>
</feature>
<feature type="binding site" evidence="1">
    <location>
        <begin position="111"/>
        <end position="114"/>
    </location>
    <ligand>
        <name>ATP</name>
        <dbReference type="ChEBI" id="CHEBI:30616"/>
    </ligand>
</feature>
<feature type="binding site" evidence="1">
    <location>
        <position position="111"/>
    </location>
    <ligand>
        <name>Mg(2+)</name>
        <dbReference type="ChEBI" id="CHEBI:18420"/>
    </ligand>
</feature>
<feature type="binding site" evidence="1">
    <location>
        <begin position="171"/>
        <end position="172"/>
    </location>
    <ligand>
        <name>ATP</name>
        <dbReference type="ChEBI" id="CHEBI:30616"/>
    </ligand>
</feature>
<protein>
    <recommendedName>
        <fullName evidence="1">ATP-dependent dethiobiotin synthetase BioD</fullName>
        <ecNumber evidence="1">6.3.3.3</ecNumber>
    </recommendedName>
    <alternativeName>
        <fullName evidence="1">DTB synthetase</fullName>
        <shortName evidence="1">DTBS</shortName>
    </alternativeName>
    <alternativeName>
        <fullName evidence="1">Dethiobiotin synthase</fullName>
    </alternativeName>
</protein>
<name>BIOD_ANADE</name>
<proteinExistence type="inferred from homology"/>
<sequence>MRGLFVTGTDTGVGKTEVACALVRAARAAGLDAVGMKPAQSGHVAGEPSDAERLREASGGVEPLEAICPYTFAAPLAPAAAARAEGREVSLARVVEAARALAARHAAVVVEGAGGLLVPLTARETHADLAAALGLPVLVVARAGLGTVNHTALTVEALERRGLPIAGIVLNRTGPEDDPSVPLNAAEIARLTHREPLALLPWEPDIARRARALGSVLAAKIQF</sequence>
<accession>Q2IM14</accession>
<organism>
    <name type="scientific">Anaeromyxobacter dehalogenans (strain 2CP-C)</name>
    <dbReference type="NCBI Taxonomy" id="290397"/>
    <lineage>
        <taxon>Bacteria</taxon>
        <taxon>Pseudomonadati</taxon>
        <taxon>Myxococcota</taxon>
        <taxon>Myxococcia</taxon>
        <taxon>Myxococcales</taxon>
        <taxon>Cystobacterineae</taxon>
        <taxon>Anaeromyxobacteraceae</taxon>
        <taxon>Anaeromyxobacter</taxon>
    </lineage>
</organism>
<reference key="1">
    <citation type="submission" date="2006-01" db="EMBL/GenBank/DDBJ databases">
        <title>Complete sequence of Anaeromyxobacter dehalogenans 2CP-C.</title>
        <authorList>
            <person name="Copeland A."/>
            <person name="Lucas S."/>
            <person name="Lapidus A."/>
            <person name="Barry K."/>
            <person name="Detter J.C."/>
            <person name="Glavina T."/>
            <person name="Hammon N."/>
            <person name="Israni S."/>
            <person name="Pitluck S."/>
            <person name="Brettin T."/>
            <person name="Bruce D."/>
            <person name="Han C."/>
            <person name="Tapia R."/>
            <person name="Gilna P."/>
            <person name="Kiss H."/>
            <person name="Schmutz J."/>
            <person name="Larimer F."/>
            <person name="Land M."/>
            <person name="Kyrpides N."/>
            <person name="Anderson I."/>
            <person name="Sanford R.A."/>
            <person name="Ritalahti K.M."/>
            <person name="Thomas H.S."/>
            <person name="Kirby J.R."/>
            <person name="Zhulin I.B."/>
            <person name="Loeffler F.E."/>
            <person name="Richardson P."/>
        </authorList>
    </citation>
    <scope>NUCLEOTIDE SEQUENCE [LARGE SCALE GENOMIC DNA]</scope>
    <source>
        <strain>2CP-C</strain>
    </source>
</reference>